<proteinExistence type="evidence at protein level"/>
<sequence length="8" mass="903">TGVAWRIT</sequence>
<feature type="chain" id="PRO_0000414705" description="Lectin">
    <location>
        <begin position="1"/>
        <end position="8" status="greater than"/>
    </location>
</feature>
<feature type="non-terminal residue" evidence="2">
    <location>
        <position position="8"/>
    </location>
</feature>
<accession>P86922</accession>
<name>LECT_GANLU</name>
<organism>
    <name type="scientific">Ganoderma lucidum</name>
    <name type="common">Ling zhi medicinal fungus</name>
    <name type="synonym">Bracket fungus</name>
    <dbReference type="NCBI Taxonomy" id="5315"/>
    <lineage>
        <taxon>Eukaryota</taxon>
        <taxon>Fungi</taxon>
        <taxon>Dikarya</taxon>
        <taxon>Basidiomycota</taxon>
        <taxon>Agaricomycotina</taxon>
        <taxon>Agaricomycetes</taxon>
        <taxon>Polyporales</taxon>
        <taxon>Polyporaceae</taxon>
        <taxon>Ganoderma</taxon>
    </lineage>
</organism>
<keyword id="KW-0929">Antimicrobial</keyword>
<keyword id="KW-0903">Direct protein sequencing</keyword>
<keyword id="KW-0293">Fruiting body</keyword>
<keyword id="KW-0295">Fungicide</keyword>
<keyword id="KW-0325">Glycoprotein</keyword>
<keyword id="KW-0348">Hemagglutinin</keyword>
<keyword id="KW-0430">Lectin</keyword>
<evidence type="ECO:0000269" key="1">
    <source>
    </source>
</evidence>
<evidence type="ECO:0000303" key="2">
    <source>
    </source>
</evidence>
<evidence type="ECO:0000305" key="3"/>
<reference evidence="3" key="1">
    <citation type="journal article" date="2011" name="Protein Pept. Lett.">
        <title>Ganoderma lucidum: A source for novel bioactive lectin.</title>
        <authorList>
            <person name="Girzal V.U."/>
            <person name="Neelagund S."/>
            <person name="Krishnappa M."/>
        </authorList>
    </citation>
    <scope>PROTEIN SEQUENCE</scope>
    <scope>FUNCTION</scope>
    <scope>BIOPHYSICOCHEMICAL PROPERTIES</scope>
    <scope>SUBUNIT</scope>
    <scope>GLYCOSYLATION</scope>
    <scope>MASS SPECTROMETRY</scope>
    <source>
        <tissue evidence="1">Fruiting body</tissue>
    </source>
</reference>
<dbReference type="GO" id="GO:0030246">
    <property type="term" value="F:carbohydrate binding"/>
    <property type="evidence" value="ECO:0007669"/>
    <property type="project" value="UniProtKB-KW"/>
</dbReference>
<dbReference type="GO" id="GO:0050832">
    <property type="term" value="P:defense response to fungus"/>
    <property type="evidence" value="ECO:0000314"/>
    <property type="project" value="UniProtKB"/>
</dbReference>
<dbReference type="GO" id="GO:0031640">
    <property type="term" value="P:killing of cells of another organism"/>
    <property type="evidence" value="ECO:0007669"/>
    <property type="project" value="UniProtKB-KW"/>
</dbReference>
<dbReference type="GO" id="GO:0034120">
    <property type="term" value="P:positive regulation of erythrocyte aggregation"/>
    <property type="evidence" value="ECO:0000314"/>
    <property type="project" value="UniProtKB"/>
</dbReference>
<comment type="function">
    <text evidence="1">Has metal-independent hemagglutinating activity against erythrocytes from human, sheep, goat, rat, rabbit and chicken. Hemagglutinating activity is inhibited by glycoproteins fetuin, asialo-fetuin, fibrinogen, asialo-fibrinogen, thyroglobulin, bovine (BSM) as well as porcine submaxillary mucin and asialo-BSM but not by sugars alpha-L-fucose, D-glucose, D-galactose, D-glucosamine, D-galactosamine, lactose, D-melibiose, D/L-mannose, D-mannosamine, D-raffinose, L-rhamnose, xylose, glacaturonic acid or N-acetylglucosamine. Has antifungal activity against F.oxysporum (MIC=20 ug/ml), P.chrysogenum (MIC=35 ug/ml), A.niger (MIC=50 ug/ml), C.musae (MIC=60 ug/ml), B.cinerea (MIC=65 ug/ml), T.rubrum (MIC=65 ug/ml), T.tonsurans (MIC=20 ug/ml), T.interdigitale (MIC=20 ug/ml), E.floccosum (MIC=15 ug/ml) and M.canis (MIC=70 ug/ml).</text>
</comment>
<comment type="biophysicochemical properties">
    <phDependence>
        <text evidence="1">Hemagglutinating activity is stable from pH 4 to pH 9 but drops sharply below pH 4 and above pH 9.</text>
    </phDependence>
    <temperatureDependence>
        <text evidence="1">Hemagglutinating activity is stable below 60 degrees Celsius but drops sharply to about 20% at 80 degrees Celsius.</text>
    </temperatureDependence>
</comment>
<comment type="subunit">
    <text evidence="1">Monomer.</text>
</comment>
<comment type="PTM">
    <text evidence="1">Glycosylated.</text>
</comment>
<comment type="mass spectrometry" mass="15090.0" method="MALDI" evidence="1"/>
<protein>
    <recommendedName>
        <fullName evidence="2">Lectin</fullName>
    </recommendedName>
</protein>